<sequence>MATKTIESSSRSGPRRTGVGSLLKPLNSEYGKVAPGWGTTPLMGVAMALFAIFLSIILEIYNSSVLLDGISIN</sequence>
<keyword id="KW-0150">Chloroplast</keyword>
<keyword id="KW-0472">Membrane</keyword>
<keyword id="KW-0597">Phosphoprotein</keyword>
<keyword id="KW-0602">Photosynthesis</keyword>
<keyword id="KW-0604">Photosystem II</keyword>
<keyword id="KW-0934">Plastid</keyword>
<keyword id="KW-0793">Thylakoid</keyword>
<keyword id="KW-0812">Transmembrane</keyword>
<keyword id="KW-1133">Transmembrane helix</keyword>
<geneLocation type="chloroplast"/>
<protein>
    <recommendedName>
        <fullName evidence="1">Photosystem II reaction center protein H</fullName>
        <shortName evidence="1">PSII-H</shortName>
    </recommendedName>
    <alternativeName>
        <fullName evidence="1">Photosystem II 10 kDa phosphoprotein</fullName>
    </alternativeName>
</protein>
<reference key="1">
    <citation type="journal article" date="2006" name="Mol. Biol. Evol.">
        <title>The chloroplast genome of Phalaenopsis aphrodite (Orchidaceae): comparative analysis of evolutionary rate with that of grasses and its phylogenetic implications.</title>
        <authorList>
            <person name="Chang C.-C."/>
            <person name="Lin H.-C."/>
            <person name="Lin I.-P."/>
            <person name="Chow T.-Y."/>
            <person name="Chen H.-H."/>
            <person name="Chen W.-H."/>
            <person name="Cheng C.-H."/>
            <person name="Lin C.-Y."/>
            <person name="Liu S.-M."/>
            <person name="Chang C.-C."/>
            <person name="Chaw S.-M."/>
        </authorList>
    </citation>
    <scope>NUCLEOTIDE SEQUENCE [LARGE SCALE GENOMIC DNA]</scope>
    <source>
        <strain>cv. Taisugar TS-97</strain>
    </source>
</reference>
<proteinExistence type="inferred from homology"/>
<feature type="chain" id="PRO_0000275767" description="Photosystem II reaction center protein H">
    <location>
        <begin position="1"/>
        <end position="73"/>
    </location>
</feature>
<feature type="transmembrane region" description="Helical" evidence="1">
    <location>
        <begin position="41"/>
        <end position="61"/>
    </location>
</feature>
<feature type="region of interest" description="Disordered" evidence="2">
    <location>
        <begin position="1"/>
        <end position="21"/>
    </location>
</feature>
<feature type="compositionally biased region" description="Polar residues" evidence="2">
    <location>
        <begin position="1"/>
        <end position="12"/>
    </location>
</feature>
<feature type="modified residue" description="Phosphothreonine" evidence="1">
    <location>
        <position position="3"/>
    </location>
</feature>
<feature type="modified residue" description="Phosphothreonine" evidence="1">
    <location>
        <position position="5"/>
    </location>
</feature>
<gene>
    <name evidence="1" type="primary">psbH</name>
</gene>
<accession>Q3BAK8</accession>
<organism>
    <name type="scientific">Phalaenopsis aphrodite subsp. formosana</name>
    <name type="common">Moth orchid</name>
    <dbReference type="NCBI Taxonomy" id="308872"/>
    <lineage>
        <taxon>Eukaryota</taxon>
        <taxon>Viridiplantae</taxon>
        <taxon>Streptophyta</taxon>
        <taxon>Embryophyta</taxon>
        <taxon>Tracheophyta</taxon>
        <taxon>Spermatophyta</taxon>
        <taxon>Magnoliopsida</taxon>
        <taxon>Liliopsida</taxon>
        <taxon>Asparagales</taxon>
        <taxon>Orchidaceae</taxon>
        <taxon>Epidendroideae</taxon>
        <taxon>Vandeae</taxon>
        <taxon>Aeridinae</taxon>
        <taxon>Phalaenopsis</taxon>
    </lineage>
</organism>
<comment type="function">
    <text evidence="1">One of the components of the core complex of photosystem II (PSII), required for its stability and/or assembly. PSII is a light-driven water:plastoquinone oxidoreductase that uses light energy to abstract electrons from H(2)O, generating O(2) and a proton gradient subsequently used for ATP formation. It consists of a core antenna complex that captures photons, and an electron transfer chain that converts photonic excitation into a charge separation.</text>
</comment>
<comment type="subunit">
    <text evidence="1">PSII is composed of 1 copy each of membrane proteins PsbA, PsbB, PsbC, PsbD, PsbE, PsbF, PsbH, PsbI, PsbJ, PsbK, PsbL, PsbM, PsbT, PsbX, PsbY, PsbZ, Psb30/Ycf12, at least 3 peripheral proteins of the oxygen-evolving complex and a large number of cofactors. It forms dimeric complexes.</text>
</comment>
<comment type="subcellular location">
    <subcellularLocation>
        <location evidence="1">Plastid</location>
        <location evidence="1">Chloroplast thylakoid membrane</location>
        <topology evidence="1">Single-pass membrane protein</topology>
    </subcellularLocation>
</comment>
<comment type="PTM">
    <text evidence="1">Phosphorylation is a light-dependent reaction catalyzed by a membrane-bound kinase; phosphorylation occurs on Thr residue(s) in the N-terminus of the protein.</text>
</comment>
<comment type="similarity">
    <text evidence="1">Belongs to the PsbH family.</text>
</comment>
<name>PSBH_PHAAO</name>
<evidence type="ECO:0000255" key="1">
    <source>
        <dbReference type="HAMAP-Rule" id="MF_00752"/>
    </source>
</evidence>
<evidence type="ECO:0000256" key="2">
    <source>
        <dbReference type="SAM" id="MobiDB-lite"/>
    </source>
</evidence>
<dbReference type="EMBL" id="AY916449">
    <property type="protein sequence ID" value="AAW82528.1"/>
    <property type="molecule type" value="Genomic_DNA"/>
</dbReference>
<dbReference type="RefSeq" id="YP_358610.1">
    <property type="nucleotide sequence ID" value="NC_007499.1"/>
</dbReference>
<dbReference type="SMR" id="Q3BAK8"/>
<dbReference type="GeneID" id="3741709"/>
<dbReference type="GO" id="GO:0009535">
    <property type="term" value="C:chloroplast thylakoid membrane"/>
    <property type="evidence" value="ECO:0007669"/>
    <property type="project" value="UniProtKB-SubCell"/>
</dbReference>
<dbReference type="GO" id="GO:0009523">
    <property type="term" value="C:photosystem II"/>
    <property type="evidence" value="ECO:0007669"/>
    <property type="project" value="UniProtKB-KW"/>
</dbReference>
<dbReference type="GO" id="GO:0042301">
    <property type="term" value="F:phosphate ion binding"/>
    <property type="evidence" value="ECO:0007669"/>
    <property type="project" value="InterPro"/>
</dbReference>
<dbReference type="GO" id="GO:0015979">
    <property type="term" value="P:photosynthesis"/>
    <property type="evidence" value="ECO:0007669"/>
    <property type="project" value="UniProtKB-UniRule"/>
</dbReference>
<dbReference type="GO" id="GO:0050821">
    <property type="term" value="P:protein stabilization"/>
    <property type="evidence" value="ECO:0007669"/>
    <property type="project" value="InterPro"/>
</dbReference>
<dbReference type="FunFam" id="1.20.5.880:FF:000001">
    <property type="entry name" value="Photosystem II reaction center protein H"/>
    <property type="match status" value="1"/>
</dbReference>
<dbReference type="Gene3D" id="1.20.5.880">
    <property type="entry name" value="Photosystem II reaction center protein H"/>
    <property type="match status" value="1"/>
</dbReference>
<dbReference type="HAMAP" id="MF_00752">
    <property type="entry name" value="PSII_PsbH"/>
    <property type="match status" value="1"/>
</dbReference>
<dbReference type="InterPro" id="IPR001056">
    <property type="entry name" value="PSII_PsbH"/>
</dbReference>
<dbReference type="InterPro" id="IPR036863">
    <property type="entry name" value="PSII_PsbH_sf"/>
</dbReference>
<dbReference type="NCBIfam" id="NF002728">
    <property type="entry name" value="PRK02624.1"/>
    <property type="match status" value="1"/>
</dbReference>
<dbReference type="PANTHER" id="PTHR34469">
    <property type="entry name" value="PHOTOSYSTEM II REACTION CENTER PROTEIN H"/>
    <property type="match status" value="1"/>
</dbReference>
<dbReference type="PANTHER" id="PTHR34469:SF4">
    <property type="entry name" value="PHOTOSYSTEM II REACTION CENTER PROTEIN H"/>
    <property type="match status" value="1"/>
</dbReference>
<dbReference type="Pfam" id="PF00737">
    <property type="entry name" value="PsbH"/>
    <property type="match status" value="1"/>
</dbReference>
<dbReference type="SUPFAM" id="SSF161025">
    <property type="entry name" value="Photosystem II 10 kDa phosphoprotein PsbH"/>
    <property type="match status" value="1"/>
</dbReference>